<comment type="function">
    <text evidence="1">Could be a nuclease involved in processing of the 5'-end of pre-16S rRNA.</text>
</comment>
<comment type="subcellular location">
    <subcellularLocation>
        <location evidence="1">Cytoplasm</location>
    </subcellularLocation>
</comment>
<comment type="similarity">
    <text evidence="1">Belongs to the YqgF nuclease family.</text>
</comment>
<gene>
    <name evidence="1" type="primary">yqgF</name>
    <name type="ordered locus">YE3429</name>
</gene>
<keyword id="KW-0963">Cytoplasm</keyword>
<keyword id="KW-0378">Hydrolase</keyword>
<keyword id="KW-0540">Nuclease</keyword>
<keyword id="KW-0690">Ribosome biogenesis</keyword>
<feature type="chain" id="PRO_1000061578" description="Putative pre-16S rRNA nuclease">
    <location>
        <begin position="1"/>
        <end position="140"/>
    </location>
</feature>
<protein>
    <recommendedName>
        <fullName evidence="1">Putative pre-16S rRNA nuclease</fullName>
        <ecNumber evidence="1">3.1.-.-</ecNumber>
    </recommendedName>
</protein>
<organism>
    <name type="scientific">Yersinia enterocolitica serotype O:8 / biotype 1B (strain NCTC 13174 / 8081)</name>
    <dbReference type="NCBI Taxonomy" id="393305"/>
    <lineage>
        <taxon>Bacteria</taxon>
        <taxon>Pseudomonadati</taxon>
        <taxon>Pseudomonadota</taxon>
        <taxon>Gammaproteobacteria</taxon>
        <taxon>Enterobacterales</taxon>
        <taxon>Yersiniaceae</taxon>
        <taxon>Yersinia</taxon>
    </lineage>
</organism>
<name>YQGF_YERE8</name>
<proteinExistence type="inferred from homology"/>
<reference key="1">
    <citation type="journal article" date="2006" name="PLoS Genet.">
        <title>The complete genome sequence and comparative genome analysis of the high pathogenicity Yersinia enterocolitica strain 8081.</title>
        <authorList>
            <person name="Thomson N.R."/>
            <person name="Howard S."/>
            <person name="Wren B.W."/>
            <person name="Holden M.T.G."/>
            <person name="Crossman L."/>
            <person name="Challis G.L."/>
            <person name="Churcher C."/>
            <person name="Mungall K."/>
            <person name="Brooks K."/>
            <person name="Chillingworth T."/>
            <person name="Feltwell T."/>
            <person name="Abdellah Z."/>
            <person name="Hauser H."/>
            <person name="Jagels K."/>
            <person name="Maddison M."/>
            <person name="Moule S."/>
            <person name="Sanders M."/>
            <person name="Whitehead S."/>
            <person name="Quail M.A."/>
            <person name="Dougan G."/>
            <person name="Parkhill J."/>
            <person name="Prentice M.B."/>
        </authorList>
    </citation>
    <scope>NUCLEOTIDE SEQUENCE [LARGE SCALE GENOMIC DNA]</scope>
    <source>
        <strain>NCTC 13174 / 8081</strain>
    </source>
</reference>
<dbReference type="EC" id="3.1.-.-" evidence="1"/>
<dbReference type="EMBL" id="AM286415">
    <property type="protein sequence ID" value="CAL13453.1"/>
    <property type="molecule type" value="Genomic_DNA"/>
</dbReference>
<dbReference type="RefSeq" id="YP_001007595.1">
    <property type="nucleotide sequence ID" value="NC_008800.1"/>
</dbReference>
<dbReference type="SMR" id="A1JPT6"/>
<dbReference type="KEGG" id="yen:YE3429"/>
<dbReference type="PATRIC" id="fig|393305.7.peg.3642"/>
<dbReference type="eggNOG" id="COG0816">
    <property type="taxonomic scope" value="Bacteria"/>
</dbReference>
<dbReference type="HOGENOM" id="CLU_098240_3_0_6"/>
<dbReference type="OrthoDB" id="9796140at2"/>
<dbReference type="Proteomes" id="UP000000642">
    <property type="component" value="Chromosome"/>
</dbReference>
<dbReference type="GO" id="GO:0005829">
    <property type="term" value="C:cytosol"/>
    <property type="evidence" value="ECO:0007669"/>
    <property type="project" value="TreeGrafter"/>
</dbReference>
<dbReference type="GO" id="GO:0004518">
    <property type="term" value="F:nuclease activity"/>
    <property type="evidence" value="ECO:0007669"/>
    <property type="project" value="UniProtKB-KW"/>
</dbReference>
<dbReference type="GO" id="GO:0000967">
    <property type="term" value="P:rRNA 5'-end processing"/>
    <property type="evidence" value="ECO:0007669"/>
    <property type="project" value="UniProtKB-UniRule"/>
</dbReference>
<dbReference type="CDD" id="cd16964">
    <property type="entry name" value="YqgF"/>
    <property type="match status" value="1"/>
</dbReference>
<dbReference type="FunFam" id="3.30.420.140:FF:000002">
    <property type="entry name" value="Putative pre-16S rRNA nuclease"/>
    <property type="match status" value="1"/>
</dbReference>
<dbReference type="Gene3D" id="3.30.420.140">
    <property type="entry name" value="YqgF/RNase H-like domain"/>
    <property type="match status" value="1"/>
</dbReference>
<dbReference type="HAMAP" id="MF_00651">
    <property type="entry name" value="Nuclease_YqgF"/>
    <property type="match status" value="1"/>
</dbReference>
<dbReference type="InterPro" id="IPR012337">
    <property type="entry name" value="RNaseH-like_sf"/>
</dbReference>
<dbReference type="InterPro" id="IPR005227">
    <property type="entry name" value="YqgF"/>
</dbReference>
<dbReference type="InterPro" id="IPR006641">
    <property type="entry name" value="YqgF/RNaseH-like_dom"/>
</dbReference>
<dbReference type="InterPro" id="IPR037027">
    <property type="entry name" value="YqgF/RNaseH-like_dom_sf"/>
</dbReference>
<dbReference type="NCBIfam" id="TIGR00250">
    <property type="entry name" value="RNAse_H_YqgF"/>
    <property type="match status" value="1"/>
</dbReference>
<dbReference type="PANTHER" id="PTHR33317">
    <property type="entry name" value="POLYNUCLEOTIDYL TRANSFERASE, RIBONUCLEASE H-LIKE SUPERFAMILY PROTEIN"/>
    <property type="match status" value="1"/>
</dbReference>
<dbReference type="PANTHER" id="PTHR33317:SF4">
    <property type="entry name" value="POLYNUCLEOTIDYL TRANSFERASE, RIBONUCLEASE H-LIKE SUPERFAMILY PROTEIN"/>
    <property type="match status" value="1"/>
</dbReference>
<dbReference type="Pfam" id="PF03652">
    <property type="entry name" value="RuvX"/>
    <property type="match status" value="1"/>
</dbReference>
<dbReference type="SMART" id="SM00732">
    <property type="entry name" value="YqgFc"/>
    <property type="match status" value="1"/>
</dbReference>
<dbReference type="SUPFAM" id="SSF53098">
    <property type="entry name" value="Ribonuclease H-like"/>
    <property type="match status" value="1"/>
</dbReference>
<sequence length="140" mass="15264">MANRTIVAFDFGTKSIGVAIGQEVTGTARALTSFKAQDGTPDWQKVEKLLKEWQPDLVVVGLPLNMDGTEQPLTARARRFANRLHGRFGVQIALQDERLSTVEARANLFDSGGYRALDKGSVDAASAVIILESWFDEQAG</sequence>
<accession>A1JPT6</accession>
<evidence type="ECO:0000255" key="1">
    <source>
        <dbReference type="HAMAP-Rule" id="MF_00651"/>
    </source>
</evidence>